<name>DF223_ARATH</name>
<organism>
    <name type="scientific">Arabidopsis thaliana</name>
    <name type="common">Mouse-ear cress</name>
    <dbReference type="NCBI Taxonomy" id="3702"/>
    <lineage>
        <taxon>Eukaryota</taxon>
        <taxon>Viridiplantae</taxon>
        <taxon>Streptophyta</taxon>
        <taxon>Embryophyta</taxon>
        <taxon>Tracheophyta</taxon>
        <taxon>Spermatophyta</taxon>
        <taxon>Magnoliopsida</taxon>
        <taxon>eudicotyledons</taxon>
        <taxon>Gunneridae</taxon>
        <taxon>Pentapetalae</taxon>
        <taxon>rosids</taxon>
        <taxon>malvids</taxon>
        <taxon>Brassicales</taxon>
        <taxon>Brassicaceae</taxon>
        <taxon>Camelineae</taxon>
        <taxon>Arabidopsis</taxon>
    </lineage>
</organism>
<sequence>MKSTIFVLTLLIFVSLYFNIIVYVSFSFIGTSEIVVPSSFKRVEGPVTAASADFCYKCSRGCYRRYRRPVFCQGSICRCSSFIDDGY</sequence>
<gene>
    <name type="ordered locus">At5g18407</name>
    <name type="ORF">F20L16</name>
</gene>
<keyword id="KW-0025">Alternative splicing</keyword>
<keyword id="KW-0929">Antimicrobial</keyword>
<keyword id="KW-1015">Disulfide bond</keyword>
<keyword id="KW-0295">Fungicide</keyword>
<keyword id="KW-0611">Plant defense</keyword>
<keyword id="KW-1185">Reference proteome</keyword>
<keyword id="KW-0964">Secreted</keyword>
<keyword id="KW-0732">Signal</keyword>
<protein>
    <recommendedName>
        <fullName>Defensin-like protein 223</fullName>
    </recommendedName>
</protein>
<comment type="subcellular location">
    <subcellularLocation>
        <location evidence="1">Secreted</location>
    </subcellularLocation>
</comment>
<comment type="alternative products">
    <event type="alternative splicing"/>
    <isoform>
        <id>Q2V369-1</id>
        <name>1</name>
        <sequence type="displayed"/>
    </isoform>
    <isoform>
        <id>Q2V369-2</id>
        <name>2</name>
        <sequence type="described" ref="VSP_037705"/>
    </isoform>
</comment>
<comment type="miscellaneous">
    <molecule>Isoform 2</molecule>
    <text evidence="3">May be due to a competing acceptor splice site.</text>
</comment>
<comment type="similarity">
    <text evidence="3">Belongs to the DEFL family.</text>
</comment>
<comment type="caution">
    <text evidence="3">Lacks 1 of the 4 disulfide bonds, which are conserved features of the family.</text>
</comment>
<feature type="signal peptide" evidence="2">
    <location>
        <begin position="1"/>
        <end position="34"/>
    </location>
</feature>
<feature type="chain" id="PRO_0000379715" description="Defensin-like protein 223">
    <location>
        <begin position="35"/>
        <end position="87"/>
    </location>
</feature>
<feature type="disulfide bond" evidence="1">
    <location>
        <begin position="55"/>
        <end position="72"/>
    </location>
</feature>
<feature type="disulfide bond" evidence="1">
    <location>
        <begin position="58"/>
        <end position="77"/>
    </location>
</feature>
<feature type="disulfide bond" evidence="1">
    <location>
        <begin position="62"/>
        <end position="79"/>
    </location>
</feature>
<feature type="splice variant" id="VSP_037705" description="In isoform 2." evidence="3">
    <original>YFNIIVYVSFSFIG</original>
    <variation>C</variation>
    <location>
        <begin position="17"/>
        <end position="30"/>
    </location>
</feature>
<proteinExistence type="evidence at transcript level"/>
<reference key="1">
    <citation type="journal article" date="2000" name="Nature">
        <title>Sequence and analysis of chromosome 5 of the plant Arabidopsis thaliana.</title>
        <authorList>
            <person name="Tabata S."/>
            <person name="Kaneko T."/>
            <person name="Nakamura Y."/>
            <person name="Kotani H."/>
            <person name="Kato T."/>
            <person name="Asamizu E."/>
            <person name="Miyajima N."/>
            <person name="Sasamoto S."/>
            <person name="Kimura T."/>
            <person name="Hosouchi T."/>
            <person name="Kawashima K."/>
            <person name="Kohara M."/>
            <person name="Matsumoto M."/>
            <person name="Matsuno A."/>
            <person name="Muraki A."/>
            <person name="Nakayama S."/>
            <person name="Nakazaki N."/>
            <person name="Naruo K."/>
            <person name="Okumura S."/>
            <person name="Shinpo S."/>
            <person name="Takeuchi C."/>
            <person name="Wada T."/>
            <person name="Watanabe A."/>
            <person name="Yamada M."/>
            <person name="Yasuda M."/>
            <person name="Sato S."/>
            <person name="de la Bastide M."/>
            <person name="Huang E."/>
            <person name="Spiegel L."/>
            <person name="Gnoj L."/>
            <person name="O'Shaughnessy A."/>
            <person name="Preston R."/>
            <person name="Habermann K."/>
            <person name="Murray J."/>
            <person name="Johnson D."/>
            <person name="Rohlfing T."/>
            <person name="Nelson J."/>
            <person name="Stoneking T."/>
            <person name="Pepin K."/>
            <person name="Spieth J."/>
            <person name="Sekhon M."/>
            <person name="Armstrong J."/>
            <person name="Becker M."/>
            <person name="Belter E."/>
            <person name="Cordum H."/>
            <person name="Cordes M."/>
            <person name="Courtney L."/>
            <person name="Courtney W."/>
            <person name="Dante M."/>
            <person name="Du H."/>
            <person name="Edwards J."/>
            <person name="Fryman J."/>
            <person name="Haakensen B."/>
            <person name="Lamar E."/>
            <person name="Latreille P."/>
            <person name="Leonard S."/>
            <person name="Meyer R."/>
            <person name="Mulvaney E."/>
            <person name="Ozersky P."/>
            <person name="Riley A."/>
            <person name="Strowmatt C."/>
            <person name="Wagner-McPherson C."/>
            <person name="Wollam A."/>
            <person name="Yoakum M."/>
            <person name="Bell M."/>
            <person name="Dedhia N."/>
            <person name="Parnell L."/>
            <person name="Shah R."/>
            <person name="Rodriguez M."/>
            <person name="Hoon See L."/>
            <person name="Vil D."/>
            <person name="Baker J."/>
            <person name="Kirchoff K."/>
            <person name="Toth K."/>
            <person name="King L."/>
            <person name="Bahret A."/>
            <person name="Miller B."/>
            <person name="Marra M.A."/>
            <person name="Martienssen R."/>
            <person name="McCombie W.R."/>
            <person name="Wilson R.K."/>
            <person name="Murphy G."/>
            <person name="Bancroft I."/>
            <person name="Volckaert G."/>
            <person name="Wambutt R."/>
            <person name="Duesterhoeft A."/>
            <person name="Stiekema W."/>
            <person name="Pohl T."/>
            <person name="Entian K.-D."/>
            <person name="Terryn N."/>
            <person name="Hartley N."/>
            <person name="Bent E."/>
            <person name="Johnson S."/>
            <person name="Langham S.-A."/>
            <person name="McCullagh B."/>
            <person name="Robben J."/>
            <person name="Grymonprez B."/>
            <person name="Zimmermann W."/>
            <person name="Ramsperger U."/>
            <person name="Wedler H."/>
            <person name="Balke K."/>
            <person name="Wedler E."/>
            <person name="Peters S."/>
            <person name="van Staveren M."/>
            <person name="Dirkse W."/>
            <person name="Mooijman P."/>
            <person name="Klein Lankhorst R."/>
            <person name="Weitzenegger T."/>
            <person name="Bothe G."/>
            <person name="Rose M."/>
            <person name="Hauf J."/>
            <person name="Berneiser S."/>
            <person name="Hempel S."/>
            <person name="Feldpausch M."/>
            <person name="Lamberth S."/>
            <person name="Villarroel R."/>
            <person name="Gielen J."/>
            <person name="Ardiles W."/>
            <person name="Bents O."/>
            <person name="Lemcke K."/>
            <person name="Kolesov G."/>
            <person name="Mayer K.F.X."/>
            <person name="Rudd S."/>
            <person name="Schoof H."/>
            <person name="Schueller C."/>
            <person name="Zaccaria P."/>
            <person name="Mewes H.-W."/>
            <person name="Bevan M."/>
            <person name="Fransz P.F."/>
        </authorList>
    </citation>
    <scope>NUCLEOTIDE SEQUENCE [LARGE SCALE GENOMIC DNA]</scope>
    <source>
        <strain>cv. Columbia</strain>
    </source>
</reference>
<reference key="2">
    <citation type="journal article" date="2017" name="Plant J.">
        <title>Araport11: a complete reannotation of the Arabidopsis thaliana reference genome.</title>
        <authorList>
            <person name="Cheng C.Y."/>
            <person name="Krishnakumar V."/>
            <person name="Chan A.P."/>
            <person name="Thibaud-Nissen F."/>
            <person name="Schobel S."/>
            <person name="Town C.D."/>
        </authorList>
    </citation>
    <scope>GENOME REANNOTATION</scope>
    <source>
        <strain>cv. Columbia</strain>
    </source>
</reference>
<reference key="3">
    <citation type="journal article" date="2005" name="Plant Physiol.">
        <title>Genome organization of more than 300 defensin-like genes in Arabidopsis.</title>
        <authorList>
            <person name="Silverstein K.A.T."/>
            <person name="Graham M.A."/>
            <person name="Paape T.D."/>
            <person name="VandenBosch K.A."/>
        </authorList>
    </citation>
    <scope>GENE FAMILY</scope>
</reference>
<accession>Q2V369</accession>
<evidence type="ECO:0000250" key="1"/>
<evidence type="ECO:0000255" key="2"/>
<evidence type="ECO:0000305" key="3"/>
<dbReference type="EMBL" id="AC051626">
    <property type="status" value="NOT_ANNOTATED_CDS"/>
    <property type="molecule type" value="Genomic_DNA"/>
</dbReference>
<dbReference type="EMBL" id="CP002688">
    <property type="protein sequence ID" value="AED92555.1"/>
    <property type="molecule type" value="Genomic_DNA"/>
</dbReference>
<dbReference type="RefSeq" id="NP_001031897.2">
    <molecule id="Q2V369-2"/>
    <property type="nucleotide sequence ID" value="NM_001036820.2"/>
</dbReference>
<dbReference type="SMR" id="Q2V369"/>
<dbReference type="STRING" id="3702.Q2V369"/>
<dbReference type="ProteomicsDB" id="224639">
    <molecule id="Q2V369-1"/>
</dbReference>
<dbReference type="EnsemblPlants" id="AT5G18407.1">
    <molecule id="Q2V369-2"/>
    <property type="protein sequence ID" value="AT5G18407.1"/>
    <property type="gene ID" value="AT5G18407"/>
</dbReference>
<dbReference type="GeneID" id="3770707"/>
<dbReference type="Gramene" id="AT5G18407.1">
    <molecule id="Q2V369-2"/>
    <property type="protein sequence ID" value="AT5G18407.1"/>
    <property type="gene ID" value="AT5G18407"/>
</dbReference>
<dbReference type="KEGG" id="ath:AT5G18407"/>
<dbReference type="Araport" id="AT5G18407"/>
<dbReference type="TAIR" id="AT5G18407"/>
<dbReference type="HOGENOM" id="CLU_2691157_0_0_1"/>
<dbReference type="InParanoid" id="Q2V369"/>
<dbReference type="OrthoDB" id="10269497at2759"/>
<dbReference type="PRO" id="PR:Q2V369"/>
<dbReference type="Proteomes" id="UP000006548">
    <property type="component" value="Chromosome 5"/>
</dbReference>
<dbReference type="GO" id="GO:0005576">
    <property type="term" value="C:extracellular region"/>
    <property type="evidence" value="ECO:0007669"/>
    <property type="project" value="UniProtKB-SubCell"/>
</dbReference>
<dbReference type="GO" id="GO:0050832">
    <property type="term" value="P:defense response to fungus"/>
    <property type="evidence" value="ECO:0007669"/>
    <property type="project" value="UniProtKB-KW"/>
</dbReference>
<dbReference type="GO" id="GO:0031640">
    <property type="term" value="P:killing of cells of another organism"/>
    <property type="evidence" value="ECO:0007669"/>
    <property type="project" value="UniProtKB-KW"/>
</dbReference>